<dbReference type="EC" id="6.3.4.16" evidence="1"/>
<dbReference type="EC" id="6.3.5.5" evidence="1"/>
<dbReference type="EMBL" id="AE017194">
    <property type="protein sequence ID" value="AAS42834.1"/>
    <property type="molecule type" value="Genomic_DNA"/>
</dbReference>
<dbReference type="SMR" id="Q732I3"/>
<dbReference type="KEGG" id="bca:BCE_3931"/>
<dbReference type="HOGENOM" id="CLU_000513_1_0_9"/>
<dbReference type="UniPathway" id="UPA00068">
    <property type="reaction ID" value="UER00171"/>
</dbReference>
<dbReference type="UniPathway" id="UPA00070">
    <property type="reaction ID" value="UER00115"/>
</dbReference>
<dbReference type="Proteomes" id="UP000002527">
    <property type="component" value="Chromosome"/>
</dbReference>
<dbReference type="GO" id="GO:0005737">
    <property type="term" value="C:cytoplasm"/>
    <property type="evidence" value="ECO:0007669"/>
    <property type="project" value="TreeGrafter"/>
</dbReference>
<dbReference type="GO" id="GO:0005524">
    <property type="term" value="F:ATP binding"/>
    <property type="evidence" value="ECO:0007669"/>
    <property type="project" value="UniProtKB-UniRule"/>
</dbReference>
<dbReference type="GO" id="GO:0004087">
    <property type="term" value="F:carbamoyl-phosphate synthase (ammonia) activity"/>
    <property type="evidence" value="ECO:0007669"/>
    <property type="project" value="RHEA"/>
</dbReference>
<dbReference type="GO" id="GO:0004088">
    <property type="term" value="F:carbamoyl-phosphate synthase (glutamine-hydrolyzing) activity"/>
    <property type="evidence" value="ECO:0007669"/>
    <property type="project" value="UniProtKB-UniRule"/>
</dbReference>
<dbReference type="GO" id="GO:0046872">
    <property type="term" value="F:metal ion binding"/>
    <property type="evidence" value="ECO:0007669"/>
    <property type="project" value="UniProtKB-KW"/>
</dbReference>
<dbReference type="GO" id="GO:0044205">
    <property type="term" value="P:'de novo' UMP biosynthetic process"/>
    <property type="evidence" value="ECO:0007669"/>
    <property type="project" value="UniProtKB-UniRule"/>
</dbReference>
<dbReference type="GO" id="GO:0006541">
    <property type="term" value="P:glutamine metabolic process"/>
    <property type="evidence" value="ECO:0007669"/>
    <property type="project" value="TreeGrafter"/>
</dbReference>
<dbReference type="GO" id="GO:0006526">
    <property type="term" value="P:L-arginine biosynthetic process"/>
    <property type="evidence" value="ECO:0007669"/>
    <property type="project" value="UniProtKB-UniRule"/>
</dbReference>
<dbReference type="CDD" id="cd01424">
    <property type="entry name" value="MGS_CPS_II"/>
    <property type="match status" value="1"/>
</dbReference>
<dbReference type="FunFam" id="1.10.1030.10:FF:000002">
    <property type="entry name" value="Carbamoyl-phosphate synthase large chain"/>
    <property type="match status" value="1"/>
</dbReference>
<dbReference type="FunFam" id="3.30.1490.20:FF:000001">
    <property type="entry name" value="Carbamoyl-phosphate synthase large chain"/>
    <property type="match status" value="1"/>
</dbReference>
<dbReference type="FunFam" id="3.30.470.20:FF:000001">
    <property type="entry name" value="Carbamoyl-phosphate synthase large chain"/>
    <property type="match status" value="1"/>
</dbReference>
<dbReference type="FunFam" id="3.30.470.20:FF:000026">
    <property type="entry name" value="Carbamoyl-phosphate synthase large chain"/>
    <property type="match status" value="1"/>
</dbReference>
<dbReference type="FunFam" id="3.40.50.1380:FF:000011">
    <property type="entry name" value="Carbamoyl-phosphate synthase large chain"/>
    <property type="match status" value="1"/>
</dbReference>
<dbReference type="FunFam" id="3.40.50.20:FF:000001">
    <property type="entry name" value="Carbamoyl-phosphate synthase large chain"/>
    <property type="match status" value="2"/>
</dbReference>
<dbReference type="Gene3D" id="3.40.50.20">
    <property type="match status" value="2"/>
</dbReference>
<dbReference type="Gene3D" id="3.30.1490.20">
    <property type="entry name" value="ATP-grasp fold, A domain"/>
    <property type="match status" value="1"/>
</dbReference>
<dbReference type="Gene3D" id="3.30.470.20">
    <property type="entry name" value="ATP-grasp fold, B domain"/>
    <property type="match status" value="2"/>
</dbReference>
<dbReference type="Gene3D" id="1.10.1030.10">
    <property type="entry name" value="Carbamoyl-phosphate synthetase, large subunit oligomerisation domain"/>
    <property type="match status" value="1"/>
</dbReference>
<dbReference type="Gene3D" id="3.40.50.1380">
    <property type="entry name" value="Methylglyoxal synthase-like domain"/>
    <property type="match status" value="1"/>
</dbReference>
<dbReference type="HAMAP" id="MF_01210_A">
    <property type="entry name" value="CPSase_L_chain_A"/>
    <property type="match status" value="1"/>
</dbReference>
<dbReference type="HAMAP" id="MF_01210_B">
    <property type="entry name" value="CPSase_L_chain_B"/>
    <property type="match status" value="1"/>
</dbReference>
<dbReference type="InterPro" id="IPR011761">
    <property type="entry name" value="ATP-grasp"/>
</dbReference>
<dbReference type="InterPro" id="IPR013815">
    <property type="entry name" value="ATP_grasp_subdomain_1"/>
</dbReference>
<dbReference type="InterPro" id="IPR006275">
    <property type="entry name" value="CarbamoylP_synth_lsu"/>
</dbReference>
<dbReference type="InterPro" id="IPR005480">
    <property type="entry name" value="CarbamoylP_synth_lsu_oligo"/>
</dbReference>
<dbReference type="InterPro" id="IPR036897">
    <property type="entry name" value="CarbamoylP_synth_lsu_oligo_sf"/>
</dbReference>
<dbReference type="InterPro" id="IPR005479">
    <property type="entry name" value="CbamoylP_synth_lsu-like_ATP-bd"/>
</dbReference>
<dbReference type="InterPro" id="IPR005483">
    <property type="entry name" value="CbamoylP_synth_lsu_CPSase_dom"/>
</dbReference>
<dbReference type="InterPro" id="IPR011607">
    <property type="entry name" value="MGS-like_dom"/>
</dbReference>
<dbReference type="InterPro" id="IPR036914">
    <property type="entry name" value="MGS-like_dom_sf"/>
</dbReference>
<dbReference type="InterPro" id="IPR033937">
    <property type="entry name" value="MGS_CPS_CarB"/>
</dbReference>
<dbReference type="InterPro" id="IPR016185">
    <property type="entry name" value="PreATP-grasp_dom_sf"/>
</dbReference>
<dbReference type="NCBIfam" id="TIGR01369">
    <property type="entry name" value="CPSaseII_lrg"/>
    <property type="match status" value="1"/>
</dbReference>
<dbReference type="NCBIfam" id="NF003671">
    <property type="entry name" value="PRK05294.1"/>
    <property type="match status" value="1"/>
</dbReference>
<dbReference type="NCBIfam" id="NF009455">
    <property type="entry name" value="PRK12815.1"/>
    <property type="match status" value="1"/>
</dbReference>
<dbReference type="PANTHER" id="PTHR11405:SF53">
    <property type="entry name" value="CARBAMOYL-PHOSPHATE SYNTHASE [AMMONIA], MITOCHONDRIAL"/>
    <property type="match status" value="1"/>
</dbReference>
<dbReference type="PANTHER" id="PTHR11405">
    <property type="entry name" value="CARBAMOYLTRANSFERASE FAMILY MEMBER"/>
    <property type="match status" value="1"/>
</dbReference>
<dbReference type="Pfam" id="PF02786">
    <property type="entry name" value="CPSase_L_D2"/>
    <property type="match status" value="2"/>
</dbReference>
<dbReference type="Pfam" id="PF02787">
    <property type="entry name" value="CPSase_L_D3"/>
    <property type="match status" value="1"/>
</dbReference>
<dbReference type="Pfam" id="PF02142">
    <property type="entry name" value="MGS"/>
    <property type="match status" value="1"/>
</dbReference>
<dbReference type="PRINTS" id="PR00098">
    <property type="entry name" value="CPSASE"/>
</dbReference>
<dbReference type="SMART" id="SM01096">
    <property type="entry name" value="CPSase_L_D3"/>
    <property type="match status" value="1"/>
</dbReference>
<dbReference type="SMART" id="SM01209">
    <property type="entry name" value="GARS_A"/>
    <property type="match status" value="1"/>
</dbReference>
<dbReference type="SMART" id="SM00851">
    <property type="entry name" value="MGS"/>
    <property type="match status" value="1"/>
</dbReference>
<dbReference type="SUPFAM" id="SSF48108">
    <property type="entry name" value="Carbamoyl phosphate synthetase, large subunit connection domain"/>
    <property type="match status" value="1"/>
</dbReference>
<dbReference type="SUPFAM" id="SSF56059">
    <property type="entry name" value="Glutathione synthetase ATP-binding domain-like"/>
    <property type="match status" value="2"/>
</dbReference>
<dbReference type="SUPFAM" id="SSF52335">
    <property type="entry name" value="Methylglyoxal synthase-like"/>
    <property type="match status" value="1"/>
</dbReference>
<dbReference type="SUPFAM" id="SSF52440">
    <property type="entry name" value="PreATP-grasp domain"/>
    <property type="match status" value="2"/>
</dbReference>
<dbReference type="PROSITE" id="PS50975">
    <property type="entry name" value="ATP_GRASP"/>
    <property type="match status" value="2"/>
</dbReference>
<dbReference type="PROSITE" id="PS00866">
    <property type="entry name" value="CPSASE_1"/>
    <property type="match status" value="2"/>
</dbReference>
<dbReference type="PROSITE" id="PS00867">
    <property type="entry name" value="CPSASE_2"/>
    <property type="match status" value="2"/>
</dbReference>
<dbReference type="PROSITE" id="PS51855">
    <property type="entry name" value="MGS"/>
    <property type="match status" value="1"/>
</dbReference>
<comment type="function">
    <text evidence="1">Large subunit of the glutamine-dependent carbamoyl phosphate synthetase (CPSase). CPSase catalyzes the formation of carbamoyl phosphate from the ammonia moiety of glutamine, carbonate, and phosphate donated by ATP, constituting the first step of 2 biosynthetic pathways, one leading to arginine and/or urea and the other to pyrimidine nucleotides. The large subunit (synthetase) binds the substrates ammonia (free or transferred from glutamine from the small subunit), hydrogencarbonate and ATP and carries out an ATP-coupled ligase reaction, activating hydrogencarbonate by forming carboxy phosphate which reacts with ammonia to form carbamoyl phosphate.</text>
</comment>
<comment type="catalytic activity">
    <reaction evidence="1">
        <text>hydrogencarbonate + L-glutamine + 2 ATP + H2O = carbamoyl phosphate + L-glutamate + 2 ADP + phosphate + 2 H(+)</text>
        <dbReference type="Rhea" id="RHEA:18633"/>
        <dbReference type="ChEBI" id="CHEBI:15377"/>
        <dbReference type="ChEBI" id="CHEBI:15378"/>
        <dbReference type="ChEBI" id="CHEBI:17544"/>
        <dbReference type="ChEBI" id="CHEBI:29985"/>
        <dbReference type="ChEBI" id="CHEBI:30616"/>
        <dbReference type="ChEBI" id="CHEBI:43474"/>
        <dbReference type="ChEBI" id="CHEBI:58228"/>
        <dbReference type="ChEBI" id="CHEBI:58359"/>
        <dbReference type="ChEBI" id="CHEBI:456216"/>
        <dbReference type="EC" id="6.3.5.5"/>
    </reaction>
</comment>
<comment type="catalytic activity">
    <molecule>Carbamoyl phosphate synthase large chain</molecule>
    <reaction evidence="1">
        <text>hydrogencarbonate + NH4(+) + 2 ATP = carbamoyl phosphate + 2 ADP + phosphate + 2 H(+)</text>
        <dbReference type="Rhea" id="RHEA:18029"/>
        <dbReference type="ChEBI" id="CHEBI:15378"/>
        <dbReference type="ChEBI" id="CHEBI:17544"/>
        <dbReference type="ChEBI" id="CHEBI:28938"/>
        <dbReference type="ChEBI" id="CHEBI:30616"/>
        <dbReference type="ChEBI" id="CHEBI:43474"/>
        <dbReference type="ChEBI" id="CHEBI:58228"/>
        <dbReference type="ChEBI" id="CHEBI:456216"/>
        <dbReference type="EC" id="6.3.4.16"/>
    </reaction>
</comment>
<comment type="cofactor">
    <cofactor evidence="1">
        <name>Mg(2+)</name>
        <dbReference type="ChEBI" id="CHEBI:18420"/>
    </cofactor>
    <cofactor evidence="1">
        <name>Mn(2+)</name>
        <dbReference type="ChEBI" id="CHEBI:29035"/>
    </cofactor>
    <text evidence="1">Binds 4 Mg(2+) or Mn(2+) ions per subunit.</text>
</comment>
<comment type="pathway">
    <text evidence="1">Amino-acid biosynthesis; L-arginine biosynthesis; carbamoyl phosphate from bicarbonate: step 1/1.</text>
</comment>
<comment type="pathway">
    <text evidence="1">Pyrimidine metabolism; UMP biosynthesis via de novo pathway; (S)-dihydroorotate from bicarbonate: step 1/3.</text>
</comment>
<comment type="subunit">
    <text evidence="1">Composed of two chains; the small (or glutamine) chain promotes the hydrolysis of glutamine to ammonia, which is used by the large (or ammonia) chain to synthesize carbamoyl phosphate. Tetramer of heterodimers (alpha,beta)4.</text>
</comment>
<comment type="domain">
    <text evidence="1">The large subunit is composed of 2 ATP-grasp domains that are involved in binding the 2 ATP molecules needed for carbamoyl phosphate synthesis. The N-terminal ATP-grasp domain (referred to as the carboxyphosphate synthetic component) catalyzes the ATP-dependent phosphorylation of hydrogencarbonate to carboxyphosphate and the subsequent nucleophilic attack by ammonia to form a carbamate intermediate. The C-terminal ATP-grasp domain (referred to as the carbamoyl phosphate synthetic component) then catalyzes the phosphorylation of carbamate with the second ATP to form the end product carbamoyl phosphate. The reactive and unstable enzyme intermediates are sequentially channeled from one active site to the next through the interior of the protein over a distance of at least 96 A.</text>
</comment>
<comment type="similarity">
    <text evidence="1">Belongs to the CarB family.</text>
</comment>
<protein>
    <recommendedName>
        <fullName evidence="1">Carbamoyl phosphate synthase large chain</fullName>
        <ecNumber evidence="1">6.3.4.16</ecNumber>
        <ecNumber evidence="1">6.3.5.5</ecNumber>
    </recommendedName>
    <alternativeName>
        <fullName evidence="1">Carbamoyl phosphate synthetase ammonia chain</fullName>
    </alternativeName>
</protein>
<evidence type="ECO:0000255" key="1">
    <source>
        <dbReference type="HAMAP-Rule" id="MF_01210"/>
    </source>
</evidence>
<proteinExistence type="inferred from homology"/>
<reference key="1">
    <citation type="journal article" date="2004" name="Nucleic Acids Res.">
        <title>The genome sequence of Bacillus cereus ATCC 10987 reveals metabolic adaptations and a large plasmid related to Bacillus anthracis pXO1.</title>
        <authorList>
            <person name="Rasko D.A."/>
            <person name="Ravel J."/>
            <person name="Oekstad O.A."/>
            <person name="Helgason E."/>
            <person name="Cer R.Z."/>
            <person name="Jiang L."/>
            <person name="Shores K.A."/>
            <person name="Fouts D.E."/>
            <person name="Tourasse N.J."/>
            <person name="Angiuoli S.V."/>
            <person name="Kolonay J.F."/>
            <person name="Nelson W.C."/>
            <person name="Kolstoe A.-B."/>
            <person name="Fraser C.M."/>
            <person name="Read T.D."/>
        </authorList>
    </citation>
    <scope>NUCLEOTIDE SEQUENCE [LARGE SCALE GENOMIC DNA]</scope>
    <source>
        <strain>ATCC 10987 / NRS 248</strain>
    </source>
</reference>
<sequence>MPKRLDINTILVIGSGPIVIGQAAEFDYSGTQACQSLKEEGYKVILVNSNPATIMTDTATADKVYIEPLTLEFVSRIIRKERPDAILPTLGGQTGLNMAVELAKSGVLEECGVEILGTKLSAIEQAEDRDLFRTLMQDLNEPTPPSEIIHNLDEAYSFVNEIGYPVIVRPAFTLGGTGGGICHNEEELIEIVTSGLKHSPVTQCLLEKSIAGCKEIEYEVMRDSNDNAIVVCNMENIDPVGVHTGDSIVVAPSQTLSDREYQMLRNTSLRIIRALGIEGGCNVQLALDPYSFQYYVIEVNPRVSRSSALASKATGYPIAKLAAKIAVGLTLDEIVNPVTQKTYACFEPALDYVVSKIPRWPFDKFESANRTLGTQMKATGEVMSIGRNLEESLLKAVRSLELGIYHLELDHLKELDKETMKKRIIKADDERLFIVAEAIRQGVTKEEINEWCEMDFFFLQKVENIVNMEREVKANVGNMEVLQTAKEMGFSDHYIAAAWNKTEREIYDMRKENNMTPVFKMVDTCAAEFESATPYYYSTYAEENESIVTDRKSVVVLGSGPIRIGQGVEFDYATVHSVWAIKEAGYEAIIINNNPETVSTDFSISDKLYFEPLTIEDVMHIIDLEKPEGVIVQFGGQTAINLAAKLEEHGVKILGTSLEDLDRAEDRDKFEAALTKLGIPQPVGKTATTVEQAVAIAEEIGYPVLVRPSYVLGGRAMEIVYRQEELLHYMKNAVKVHADHPVLIDRYMVGKEIEVDAISDGENVFIPGIMEHIERAGVHSGDSIGVYPPQSLSEKLKEQIIEHTIALGKGLNIVGLLNIQFVVFENQVYVIEVNPRASRTVPFLSKITGVPMANVATKVILGQDLVEQGYGTGYHPEEKEVYVKAPVFSFAKLRSVDTTLGPEMKSTGEVMGKDLTLEKALYKGLVASGINIPTHGSVIITVADKDKEEAMEIAKRFHEIGYNLLATAGTAQSLTEQNIPVQVVNKIDSEDYNLLDIIRQGKAQFVINTLTKGKQPARDGFRIRRESVENGVACLTSLDTTRAILRVLESMTFSAHSMKEITQTKRHEVVHA</sequence>
<feature type="chain" id="PRO_1000066338" description="Carbamoyl phosphate synthase large chain">
    <location>
        <begin position="1"/>
        <end position="1072"/>
    </location>
</feature>
<feature type="domain" description="ATP-grasp 1" evidence="1">
    <location>
        <begin position="133"/>
        <end position="327"/>
    </location>
</feature>
<feature type="domain" description="ATP-grasp 2" evidence="1">
    <location>
        <begin position="671"/>
        <end position="861"/>
    </location>
</feature>
<feature type="domain" description="MGS-like" evidence="1">
    <location>
        <begin position="930"/>
        <end position="1072"/>
    </location>
</feature>
<feature type="region of interest" description="Carboxyphosphate synthetic domain" evidence="1">
    <location>
        <begin position="1"/>
        <end position="401"/>
    </location>
</feature>
<feature type="region of interest" description="Oligomerization domain" evidence="1">
    <location>
        <begin position="402"/>
        <end position="546"/>
    </location>
</feature>
<feature type="region of interest" description="Carbamoyl phosphate synthetic domain" evidence="1">
    <location>
        <begin position="547"/>
        <end position="929"/>
    </location>
</feature>
<feature type="region of interest" description="Allosteric domain" evidence="1">
    <location>
        <begin position="930"/>
        <end position="1072"/>
    </location>
</feature>
<feature type="binding site" evidence="1">
    <location>
        <position position="129"/>
    </location>
    <ligand>
        <name>ATP</name>
        <dbReference type="ChEBI" id="CHEBI:30616"/>
        <label>1</label>
    </ligand>
</feature>
<feature type="binding site" evidence="1">
    <location>
        <position position="169"/>
    </location>
    <ligand>
        <name>ATP</name>
        <dbReference type="ChEBI" id="CHEBI:30616"/>
        <label>1</label>
    </ligand>
</feature>
<feature type="binding site" evidence="1">
    <location>
        <position position="175"/>
    </location>
    <ligand>
        <name>ATP</name>
        <dbReference type="ChEBI" id="CHEBI:30616"/>
        <label>1</label>
    </ligand>
</feature>
<feature type="binding site" evidence="1">
    <location>
        <position position="176"/>
    </location>
    <ligand>
        <name>ATP</name>
        <dbReference type="ChEBI" id="CHEBI:30616"/>
        <label>1</label>
    </ligand>
</feature>
<feature type="binding site" evidence="1">
    <location>
        <position position="208"/>
    </location>
    <ligand>
        <name>ATP</name>
        <dbReference type="ChEBI" id="CHEBI:30616"/>
        <label>1</label>
    </ligand>
</feature>
<feature type="binding site" evidence="1">
    <location>
        <position position="210"/>
    </location>
    <ligand>
        <name>ATP</name>
        <dbReference type="ChEBI" id="CHEBI:30616"/>
        <label>1</label>
    </ligand>
</feature>
<feature type="binding site" evidence="1">
    <location>
        <position position="215"/>
    </location>
    <ligand>
        <name>ATP</name>
        <dbReference type="ChEBI" id="CHEBI:30616"/>
        <label>1</label>
    </ligand>
</feature>
<feature type="binding site" evidence="1">
    <location>
        <position position="241"/>
    </location>
    <ligand>
        <name>ATP</name>
        <dbReference type="ChEBI" id="CHEBI:30616"/>
        <label>1</label>
    </ligand>
</feature>
<feature type="binding site" evidence="1">
    <location>
        <position position="242"/>
    </location>
    <ligand>
        <name>ATP</name>
        <dbReference type="ChEBI" id="CHEBI:30616"/>
        <label>1</label>
    </ligand>
</feature>
<feature type="binding site" evidence="1">
    <location>
        <position position="243"/>
    </location>
    <ligand>
        <name>ATP</name>
        <dbReference type="ChEBI" id="CHEBI:30616"/>
        <label>1</label>
    </ligand>
</feature>
<feature type="binding site" evidence="1">
    <location>
        <position position="284"/>
    </location>
    <ligand>
        <name>ATP</name>
        <dbReference type="ChEBI" id="CHEBI:30616"/>
        <label>1</label>
    </ligand>
</feature>
<feature type="binding site" evidence="1">
    <location>
        <position position="284"/>
    </location>
    <ligand>
        <name>Mg(2+)</name>
        <dbReference type="ChEBI" id="CHEBI:18420"/>
        <label>1</label>
    </ligand>
</feature>
<feature type="binding site" evidence="1">
    <location>
        <position position="284"/>
    </location>
    <ligand>
        <name>Mn(2+)</name>
        <dbReference type="ChEBI" id="CHEBI:29035"/>
        <label>1</label>
    </ligand>
</feature>
<feature type="binding site" evidence="1">
    <location>
        <position position="298"/>
    </location>
    <ligand>
        <name>ATP</name>
        <dbReference type="ChEBI" id="CHEBI:30616"/>
        <label>1</label>
    </ligand>
</feature>
<feature type="binding site" evidence="1">
    <location>
        <position position="298"/>
    </location>
    <ligand>
        <name>Mg(2+)</name>
        <dbReference type="ChEBI" id="CHEBI:18420"/>
        <label>1</label>
    </ligand>
</feature>
<feature type="binding site" evidence="1">
    <location>
        <position position="298"/>
    </location>
    <ligand>
        <name>Mg(2+)</name>
        <dbReference type="ChEBI" id="CHEBI:18420"/>
        <label>2</label>
    </ligand>
</feature>
<feature type="binding site" evidence="1">
    <location>
        <position position="298"/>
    </location>
    <ligand>
        <name>Mn(2+)</name>
        <dbReference type="ChEBI" id="CHEBI:29035"/>
        <label>1</label>
    </ligand>
</feature>
<feature type="binding site" evidence="1">
    <location>
        <position position="298"/>
    </location>
    <ligand>
        <name>Mn(2+)</name>
        <dbReference type="ChEBI" id="CHEBI:29035"/>
        <label>2</label>
    </ligand>
</feature>
<feature type="binding site" evidence="1">
    <location>
        <position position="300"/>
    </location>
    <ligand>
        <name>Mg(2+)</name>
        <dbReference type="ChEBI" id="CHEBI:18420"/>
        <label>2</label>
    </ligand>
</feature>
<feature type="binding site" evidence="1">
    <location>
        <position position="300"/>
    </location>
    <ligand>
        <name>Mn(2+)</name>
        <dbReference type="ChEBI" id="CHEBI:29035"/>
        <label>2</label>
    </ligand>
</feature>
<feature type="binding site" evidence="1">
    <location>
        <position position="707"/>
    </location>
    <ligand>
        <name>ATP</name>
        <dbReference type="ChEBI" id="CHEBI:30616"/>
        <label>2</label>
    </ligand>
</feature>
<feature type="binding site" evidence="1">
    <location>
        <position position="746"/>
    </location>
    <ligand>
        <name>ATP</name>
        <dbReference type="ChEBI" id="CHEBI:30616"/>
        <label>2</label>
    </ligand>
</feature>
<feature type="binding site" evidence="1">
    <location>
        <position position="752"/>
    </location>
    <ligand>
        <name>ATP</name>
        <dbReference type="ChEBI" id="CHEBI:30616"/>
        <label>2</label>
    </ligand>
</feature>
<feature type="binding site" evidence="1">
    <location>
        <position position="777"/>
    </location>
    <ligand>
        <name>ATP</name>
        <dbReference type="ChEBI" id="CHEBI:30616"/>
        <label>2</label>
    </ligand>
</feature>
<feature type="binding site" evidence="1">
    <location>
        <position position="778"/>
    </location>
    <ligand>
        <name>ATP</name>
        <dbReference type="ChEBI" id="CHEBI:30616"/>
        <label>2</label>
    </ligand>
</feature>
<feature type="binding site" evidence="1">
    <location>
        <position position="779"/>
    </location>
    <ligand>
        <name>ATP</name>
        <dbReference type="ChEBI" id="CHEBI:30616"/>
        <label>2</label>
    </ligand>
</feature>
<feature type="binding site" evidence="1">
    <location>
        <position position="780"/>
    </location>
    <ligand>
        <name>ATP</name>
        <dbReference type="ChEBI" id="CHEBI:30616"/>
        <label>2</label>
    </ligand>
</feature>
<feature type="binding site" evidence="1">
    <location>
        <position position="820"/>
    </location>
    <ligand>
        <name>ATP</name>
        <dbReference type="ChEBI" id="CHEBI:30616"/>
        <label>2</label>
    </ligand>
</feature>
<feature type="binding site" evidence="1">
    <location>
        <position position="820"/>
    </location>
    <ligand>
        <name>Mg(2+)</name>
        <dbReference type="ChEBI" id="CHEBI:18420"/>
        <label>3</label>
    </ligand>
</feature>
<feature type="binding site" evidence="1">
    <location>
        <position position="820"/>
    </location>
    <ligand>
        <name>Mn(2+)</name>
        <dbReference type="ChEBI" id="CHEBI:29035"/>
        <label>3</label>
    </ligand>
</feature>
<feature type="binding site" evidence="1">
    <location>
        <position position="832"/>
    </location>
    <ligand>
        <name>ATP</name>
        <dbReference type="ChEBI" id="CHEBI:30616"/>
        <label>2</label>
    </ligand>
</feature>
<feature type="binding site" evidence="1">
    <location>
        <position position="832"/>
    </location>
    <ligand>
        <name>Mg(2+)</name>
        <dbReference type="ChEBI" id="CHEBI:18420"/>
        <label>3</label>
    </ligand>
</feature>
<feature type="binding site" evidence="1">
    <location>
        <position position="832"/>
    </location>
    <ligand>
        <name>Mg(2+)</name>
        <dbReference type="ChEBI" id="CHEBI:18420"/>
        <label>4</label>
    </ligand>
</feature>
<feature type="binding site" evidence="1">
    <location>
        <position position="832"/>
    </location>
    <ligand>
        <name>Mn(2+)</name>
        <dbReference type="ChEBI" id="CHEBI:29035"/>
        <label>3</label>
    </ligand>
</feature>
<feature type="binding site" evidence="1">
    <location>
        <position position="832"/>
    </location>
    <ligand>
        <name>Mn(2+)</name>
        <dbReference type="ChEBI" id="CHEBI:29035"/>
        <label>4</label>
    </ligand>
</feature>
<feature type="binding site" evidence="1">
    <location>
        <position position="834"/>
    </location>
    <ligand>
        <name>Mg(2+)</name>
        <dbReference type="ChEBI" id="CHEBI:18420"/>
        <label>4</label>
    </ligand>
</feature>
<feature type="binding site" evidence="1">
    <location>
        <position position="834"/>
    </location>
    <ligand>
        <name>Mn(2+)</name>
        <dbReference type="ChEBI" id="CHEBI:29035"/>
        <label>4</label>
    </ligand>
</feature>
<gene>
    <name evidence="1" type="primary">carB</name>
    <name type="ordered locus">BCE_3931</name>
</gene>
<keyword id="KW-0028">Amino-acid biosynthesis</keyword>
<keyword id="KW-0055">Arginine biosynthesis</keyword>
<keyword id="KW-0067">ATP-binding</keyword>
<keyword id="KW-0436">Ligase</keyword>
<keyword id="KW-0460">Magnesium</keyword>
<keyword id="KW-0464">Manganese</keyword>
<keyword id="KW-0479">Metal-binding</keyword>
<keyword id="KW-0547">Nucleotide-binding</keyword>
<keyword id="KW-0665">Pyrimidine biosynthesis</keyword>
<keyword id="KW-0677">Repeat</keyword>
<name>CARB_BACC1</name>
<accession>Q732I3</accession>
<organism>
    <name type="scientific">Bacillus cereus (strain ATCC 10987 / NRS 248)</name>
    <dbReference type="NCBI Taxonomy" id="222523"/>
    <lineage>
        <taxon>Bacteria</taxon>
        <taxon>Bacillati</taxon>
        <taxon>Bacillota</taxon>
        <taxon>Bacilli</taxon>
        <taxon>Bacillales</taxon>
        <taxon>Bacillaceae</taxon>
        <taxon>Bacillus</taxon>
        <taxon>Bacillus cereus group</taxon>
    </lineage>
</organism>